<feature type="chain" id="PRO_0000202996" description="Uncharacterized protein YIL029C">
    <location>
        <begin position="1"/>
        <end position="142"/>
    </location>
</feature>
<feature type="transmembrane region" description="Helical" evidence="1">
    <location>
        <begin position="3"/>
        <end position="23"/>
    </location>
</feature>
<feature type="transmembrane region" description="Helical" evidence="1">
    <location>
        <begin position="30"/>
        <end position="50"/>
    </location>
</feature>
<feature type="transmembrane region" description="Helical" evidence="1">
    <location>
        <begin position="91"/>
        <end position="111"/>
    </location>
</feature>
<reference key="1">
    <citation type="journal article" date="1997" name="Nature">
        <title>The nucleotide sequence of Saccharomyces cerevisiae chromosome IX.</title>
        <authorList>
            <person name="Churcher C.M."/>
            <person name="Bowman S."/>
            <person name="Badcock K."/>
            <person name="Bankier A.T."/>
            <person name="Brown D."/>
            <person name="Chillingworth T."/>
            <person name="Connor R."/>
            <person name="Devlin K."/>
            <person name="Gentles S."/>
            <person name="Hamlin N."/>
            <person name="Harris D.E."/>
            <person name="Horsnell T."/>
            <person name="Hunt S."/>
            <person name="Jagels K."/>
            <person name="Jones M."/>
            <person name="Lye G."/>
            <person name="Moule S."/>
            <person name="Odell C."/>
            <person name="Pearson D."/>
            <person name="Rajandream M.A."/>
            <person name="Rice P."/>
            <person name="Rowley N."/>
            <person name="Skelton J."/>
            <person name="Smith V."/>
            <person name="Walsh S.V."/>
            <person name="Whitehead S."/>
            <person name="Barrell B.G."/>
        </authorList>
    </citation>
    <scope>NUCLEOTIDE SEQUENCE [LARGE SCALE GENOMIC DNA]</scope>
    <source>
        <strain>ATCC 204508 / S288c</strain>
    </source>
</reference>
<reference key="2">
    <citation type="journal article" date="2014" name="G3 (Bethesda)">
        <title>The reference genome sequence of Saccharomyces cerevisiae: Then and now.</title>
        <authorList>
            <person name="Engel S.R."/>
            <person name="Dietrich F.S."/>
            <person name="Fisk D.G."/>
            <person name="Binkley G."/>
            <person name="Balakrishnan R."/>
            <person name="Costanzo M.C."/>
            <person name="Dwight S.S."/>
            <person name="Hitz B.C."/>
            <person name="Karra K."/>
            <person name="Nash R.S."/>
            <person name="Weng S."/>
            <person name="Wong E.D."/>
            <person name="Lloyd P."/>
            <person name="Skrzypek M.S."/>
            <person name="Miyasato S.R."/>
            <person name="Simison M."/>
            <person name="Cherry J.M."/>
        </authorList>
    </citation>
    <scope>GENOME REANNOTATION</scope>
    <source>
        <strain>ATCC 204508 / S288c</strain>
    </source>
</reference>
<reference key="3">
    <citation type="journal article" date="2007" name="Genome Res.">
        <title>Approaching a complete repository of sequence-verified protein-encoding clones for Saccharomyces cerevisiae.</title>
        <authorList>
            <person name="Hu Y."/>
            <person name="Rolfs A."/>
            <person name="Bhullar B."/>
            <person name="Murthy T.V.S."/>
            <person name="Zhu C."/>
            <person name="Berger M.F."/>
            <person name="Camargo A.A."/>
            <person name="Kelley F."/>
            <person name="McCarron S."/>
            <person name="Jepson D."/>
            <person name="Richardson A."/>
            <person name="Raphael J."/>
            <person name="Moreira D."/>
            <person name="Taycher E."/>
            <person name="Zuo D."/>
            <person name="Mohr S."/>
            <person name="Kane M.F."/>
            <person name="Williamson J."/>
            <person name="Simpson A.J.G."/>
            <person name="Bulyk M.L."/>
            <person name="Harlow E."/>
            <person name="Marsischky G."/>
            <person name="Kolodner R.D."/>
            <person name="LaBaer J."/>
        </authorList>
    </citation>
    <scope>NUCLEOTIDE SEQUENCE [GENOMIC DNA]</scope>
    <source>
        <strain>ATCC 204508 / S288c</strain>
    </source>
</reference>
<keyword id="KW-0472">Membrane</keyword>
<keyword id="KW-1185">Reference proteome</keyword>
<keyword id="KW-0812">Transmembrane</keyword>
<keyword id="KW-1133">Transmembrane helix</keyword>
<comment type="subcellular location">
    <subcellularLocation>
        <location evidence="2">Membrane</location>
        <topology evidence="2">Multi-pass membrane protein</topology>
    </subcellularLocation>
</comment>
<name>YIC9_YEAST</name>
<sequence>MRLIFIAKMLQYSFLPFSPFNLLNFDNSISVSWFITYSVIVSIWGFAVWIEGAYRNKINLQLPRCTKIKCSRYNTRIKSPKWFNCKNWMHFFLLYLFLTASNLIVQLAYFSKEMCSQGINVPGTKKPGNRVYLSVIILMGNG</sequence>
<protein>
    <recommendedName>
        <fullName>Uncharacterized protein YIL029C</fullName>
    </recommendedName>
</protein>
<proteinExistence type="predicted"/>
<accession>P40538</accession>
<accession>D6VVQ2</accession>
<dbReference type="EMBL" id="Z46881">
    <property type="protein sequence ID" value="CAA86962.1"/>
    <property type="molecule type" value="Genomic_DNA"/>
</dbReference>
<dbReference type="EMBL" id="AY692646">
    <property type="protein sequence ID" value="AAT92665.1"/>
    <property type="molecule type" value="Genomic_DNA"/>
</dbReference>
<dbReference type="EMBL" id="BK006942">
    <property type="protein sequence ID" value="DAA08518.1"/>
    <property type="molecule type" value="Genomic_DNA"/>
</dbReference>
<dbReference type="PIR" id="S49952">
    <property type="entry name" value="S49952"/>
</dbReference>
<dbReference type="BioGRID" id="34961">
    <property type="interactions" value="34"/>
</dbReference>
<dbReference type="DIP" id="DIP-2586N"/>
<dbReference type="FunCoup" id="P40538">
    <property type="interactions" value="1"/>
</dbReference>
<dbReference type="IntAct" id="P40538">
    <property type="interactions" value="2"/>
</dbReference>
<dbReference type="MINT" id="P40538"/>
<dbReference type="STRING" id="4932.YIL029C"/>
<dbReference type="TCDB" id="3.A.30.1.1">
    <property type="family name" value="the endoplasmic reticulum surface retrieval pathway (er-surf) family"/>
</dbReference>
<dbReference type="PaxDb" id="4932-YIL029C"/>
<dbReference type="EnsemblFungi" id="YIL029C_mRNA">
    <property type="protein sequence ID" value="YIL029C"/>
    <property type="gene ID" value="YIL029C"/>
</dbReference>
<dbReference type="KEGG" id="sce:YIL029C"/>
<dbReference type="AGR" id="SGD:S000001291"/>
<dbReference type="SGD" id="S000001291">
    <property type="gene designation" value="YIL029C"/>
</dbReference>
<dbReference type="VEuPathDB" id="FungiDB:YIL029C"/>
<dbReference type="GeneTree" id="ENSGT00940000181333"/>
<dbReference type="HOGENOM" id="CLU_1816899_0_0_1"/>
<dbReference type="InParanoid" id="P40538"/>
<dbReference type="OrthoDB" id="10282239at2759"/>
<dbReference type="BioCyc" id="YEAST:G3O-31302-MONOMER"/>
<dbReference type="BioGRID-ORCS" id="854783">
    <property type="hits" value="0 hits in 10 CRISPR screens"/>
</dbReference>
<dbReference type="PRO" id="PR:P40538"/>
<dbReference type="Proteomes" id="UP000002311">
    <property type="component" value="Chromosome IX"/>
</dbReference>
<dbReference type="RNAct" id="P40538">
    <property type="molecule type" value="protein"/>
</dbReference>
<dbReference type="GO" id="GO:0016020">
    <property type="term" value="C:membrane"/>
    <property type="evidence" value="ECO:0000255"/>
    <property type="project" value="SGD"/>
</dbReference>
<dbReference type="InterPro" id="IPR031427">
    <property type="entry name" value="DUF4668"/>
</dbReference>
<dbReference type="Pfam" id="PF15701">
    <property type="entry name" value="DUF4668"/>
    <property type="match status" value="1"/>
</dbReference>
<gene>
    <name type="ordered locus">YIL029C</name>
</gene>
<evidence type="ECO:0000255" key="1"/>
<evidence type="ECO:0000305" key="2"/>
<organism>
    <name type="scientific">Saccharomyces cerevisiae (strain ATCC 204508 / S288c)</name>
    <name type="common">Baker's yeast</name>
    <dbReference type="NCBI Taxonomy" id="559292"/>
    <lineage>
        <taxon>Eukaryota</taxon>
        <taxon>Fungi</taxon>
        <taxon>Dikarya</taxon>
        <taxon>Ascomycota</taxon>
        <taxon>Saccharomycotina</taxon>
        <taxon>Saccharomycetes</taxon>
        <taxon>Saccharomycetales</taxon>
        <taxon>Saccharomycetaceae</taxon>
        <taxon>Saccharomyces</taxon>
    </lineage>
</organism>